<feature type="chain" id="PRO_1000010262" description="Imidazoleglycerol-phosphate dehydratase">
    <location>
        <begin position="1"/>
        <end position="195"/>
    </location>
</feature>
<comment type="catalytic activity">
    <reaction evidence="1">
        <text>D-erythro-1-(imidazol-4-yl)glycerol 3-phosphate = 3-(imidazol-4-yl)-2-oxopropyl phosphate + H2O</text>
        <dbReference type="Rhea" id="RHEA:11040"/>
        <dbReference type="ChEBI" id="CHEBI:15377"/>
        <dbReference type="ChEBI" id="CHEBI:57766"/>
        <dbReference type="ChEBI" id="CHEBI:58278"/>
        <dbReference type="EC" id="4.2.1.19"/>
    </reaction>
</comment>
<comment type="pathway">
    <text evidence="1">Amino-acid biosynthesis; L-histidine biosynthesis; L-histidine from 5-phospho-alpha-D-ribose 1-diphosphate: step 6/9.</text>
</comment>
<comment type="subcellular location">
    <subcellularLocation>
        <location evidence="1">Cytoplasm</location>
    </subcellularLocation>
</comment>
<comment type="similarity">
    <text evidence="1">Belongs to the imidazoleglycerol-phosphate dehydratase family.</text>
</comment>
<reference key="1">
    <citation type="journal article" date="2005" name="BMC Genomics">
        <title>Bacterial genome adaptation to niches: divergence of the potential virulence genes in three Burkholderia species of different survival strategies.</title>
        <authorList>
            <person name="Kim H.S."/>
            <person name="Schell M.A."/>
            <person name="Yu Y."/>
            <person name="Ulrich R.L."/>
            <person name="Sarria S.H."/>
            <person name="Nierman W.C."/>
            <person name="DeShazer D."/>
        </authorList>
    </citation>
    <scope>NUCLEOTIDE SEQUENCE [LARGE SCALE GENOMIC DNA]</scope>
    <source>
        <strain>ATCC 700388 / DSM 13276 / CCUG 48851 / CIP 106301 / E264</strain>
    </source>
</reference>
<sequence length="195" mass="21518">MRVAEVVRNTSETQIRVKIDLDGTGRQKLATGVPFLDHMLDQIARHGLVDLDIEAHGDTHIDDHHTVEDVGITLGQAVAKAVGDKKGIRRYGHSYVPLDEALSRVVIDFSGRPGLEFHVPFTRARIGTFDVDLSIEFFRGFVNHAGVTLHIDNLRGVNAHHQLETVFKAFGRALRMAVELDERAAGQIPSTKGSL</sequence>
<protein>
    <recommendedName>
        <fullName evidence="1">Imidazoleglycerol-phosphate dehydratase</fullName>
        <shortName evidence="1">IGPD</shortName>
        <ecNumber evidence="1">4.2.1.19</ecNumber>
    </recommendedName>
</protein>
<accession>Q2SUA4</accession>
<proteinExistence type="inferred from homology"/>
<organism>
    <name type="scientific">Burkholderia thailandensis (strain ATCC 700388 / DSM 13276 / CCUG 48851 / CIP 106301 / E264)</name>
    <dbReference type="NCBI Taxonomy" id="271848"/>
    <lineage>
        <taxon>Bacteria</taxon>
        <taxon>Pseudomonadati</taxon>
        <taxon>Pseudomonadota</taxon>
        <taxon>Betaproteobacteria</taxon>
        <taxon>Burkholderiales</taxon>
        <taxon>Burkholderiaceae</taxon>
        <taxon>Burkholderia</taxon>
        <taxon>pseudomallei group</taxon>
    </lineage>
</organism>
<dbReference type="EC" id="4.2.1.19" evidence="1"/>
<dbReference type="EMBL" id="CP000086">
    <property type="protein sequence ID" value="ABC39035.1"/>
    <property type="molecule type" value="Genomic_DNA"/>
</dbReference>
<dbReference type="RefSeq" id="WP_009888530.1">
    <property type="nucleotide sequence ID" value="NZ_CP008786.1"/>
</dbReference>
<dbReference type="SMR" id="Q2SUA4"/>
<dbReference type="GeneID" id="45122679"/>
<dbReference type="KEGG" id="bte:BTH_I2991"/>
<dbReference type="HOGENOM" id="CLU_044308_2_0_4"/>
<dbReference type="UniPathway" id="UPA00031">
    <property type="reaction ID" value="UER00011"/>
</dbReference>
<dbReference type="Proteomes" id="UP000001930">
    <property type="component" value="Chromosome I"/>
</dbReference>
<dbReference type="GO" id="GO:0005737">
    <property type="term" value="C:cytoplasm"/>
    <property type="evidence" value="ECO:0007669"/>
    <property type="project" value="UniProtKB-SubCell"/>
</dbReference>
<dbReference type="GO" id="GO:0004424">
    <property type="term" value="F:imidazoleglycerol-phosphate dehydratase activity"/>
    <property type="evidence" value="ECO:0007669"/>
    <property type="project" value="UniProtKB-UniRule"/>
</dbReference>
<dbReference type="GO" id="GO:0000105">
    <property type="term" value="P:L-histidine biosynthetic process"/>
    <property type="evidence" value="ECO:0007669"/>
    <property type="project" value="UniProtKB-UniRule"/>
</dbReference>
<dbReference type="CDD" id="cd07914">
    <property type="entry name" value="IGPD"/>
    <property type="match status" value="1"/>
</dbReference>
<dbReference type="FunFam" id="3.30.230.40:FF:000002">
    <property type="entry name" value="Imidazoleglycerol-phosphate dehydratase"/>
    <property type="match status" value="1"/>
</dbReference>
<dbReference type="FunFam" id="3.30.230.40:FF:000003">
    <property type="entry name" value="Imidazoleglycerol-phosphate dehydratase HisB"/>
    <property type="match status" value="1"/>
</dbReference>
<dbReference type="Gene3D" id="3.30.230.40">
    <property type="entry name" value="Imidazole glycerol phosphate dehydratase, domain 1"/>
    <property type="match status" value="2"/>
</dbReference>
<dbReference type="HAMAP" id="MF_00076">
    <property type="entry name" value="HisB"/>
    <property type="match status" value="1"/>
</dbReference>
<dbReference type="InterPro" id="IPR038494">
    <property type="entry name" value="IGPD_sf"/>
</dbReference>
<dbReference type="InterPro" id="IPR000807">
    <property type="entry name" value="ImidazoleglycerolP_deHydtase"/>
</dbReference>
<dbReference type="InterPro" id="IPR020565">
    <property type="entry name" value="ImidazoleglycerP_deHydtase_CS"/>
</dbReference>
<dbReference type="InterPro" id="IPR020568">
    <property type="entry name" value="Ribosomal_Su5_D2-typ_SF"/>
</dbReference>
<dbReference type="NCBIfam" id="NF002106">
    <property type="entry name" value="PRK00951.1-1"/>
    <property type="match status" value="1"/>
</dbReference>
<dbReference type="NCBIfam" id="NF002109">
    <property type="entry name" value="PRK00951.1-5"/>
    <property type="match status" value="1"/>
</dbReference>
<dbReference type="NCBIfam" id="NF002111">
    <property type="entry name" value="PRK00951.2-1"/>
    <property type="match status" value="1"/>
</dbReference>
<dbReference type="NCBIfam" id="NF002114">
    <property type="entry name" value="PRK00951.2-4"/>
    <property type="match status" value="1"/>
</dbReference>
<dbReference type="PANTHER" id="PTHR23133:SF2">
    <property type="entry name" value="IMIDAZOLEGLYCEROL-PHOSPHATE DEHYDRATASE"/>
    <property type="match status" value="1"/>
</dbReference>
<dbReference type="PANTHER" id="PTHR23133">
    <property type="entry name" value="IMIDAZOLEGLYCEROL-PHOSPHATE DEHYDRATASE HIS7"/>
    <property type="match status" value="1"/>
</dbReference>
<dbReference type="Pfam" id="PF00475">
    <property type="entry name" value="IGPD"/>
    <property type="match status" value="1"/>
</dbReference>
<dbReference type="SUPFAM" id="SSF54211">
    <property type="entry name" value="Ribosomal protein S5 domain 2-like"/>
    <property type="match status" value="2"/>
</dbReference>
<dbReference type="PROSITE" id="PS00954">
    <property type="entry name" value="IGP_DEHYDRATASE_1"/>
    <property type="match status" value="1"/>
</dbReference>
<dbReference type="PROSITE" id="PS00955">
    <property type="entry name" value="IGP_DEHYDRATASE_2"/>
    <property type="match status" value="1"/>
</dbReference>
<gene>
    <name evidence="1" type="primary">hisB</name>
    <name type="ordered locus">BTH_I2991</name>
</gene>
<keyword id="KW-0028">Amino-acid biosynthesis</keyword>
<keyword id="KW-0963">Cytoplasm</keyword>
<keyword id="KW-0368">Histidine biosynthesis</keyword>
<keyword id="KW-0456">Lyase</keyword>
<name>HIS7_BURTA</name>
<evidence type="ECO:0000255" key="1">
    <source>
        <dbReference type="HAMAP-Rule" id="MF_00076"/>
    </source>
</evidence>